<proteinExistence type="inferred from homology"/>
<organism>
    <name type="scientific">Pyrococcus horikoshii (strain ATCC 700860 / DSM 12428 / JCM 9974 / NBRC 100139 / OT-3)</name>
    <dbReference type="NCBI Taxonomy" id="70601"/>
    <lineage>
        <taxon>Archaea</taxon>
        <taxon>Methanobacteriati</taxon>
        <taxon>Methanobacteriota</taxon>
        <taxon>Thermococci</taxon>
        <taxon>Thermococcales</taxon>
        <taxon>Thermococcaceae</taxon>
        <taxon>Pyrococcus</taxon>
    </lineage>
</organism>
<feature type="chain" id="PRO_0000050153" description="Exosome complex component Rrp4">
    <location>
        <begin position="1"/>
        <end position="265"/>
    </location>
</feature>
<feature type="domain" description="S1 motif" evidence="1">
    <location>
        <begin position="65"/>
        <end position="137"/>
    </location>
</feature>
<feature type="domain" description="KH" evidence="1">
    <location>
        <begin position="147"/>
        <end position="205"/>
    </location>
</feature>
<feature type="region of interest" description="Disordered" evidence="2">
    <location>
        <begin position="241"/>
        <end position="265"/>
    </location>
</feature>
<feature type="compositionally biased region" description="Acidic residues" evidence="2">
    <location>
        <begin position="241"/>
        <end position="254"/>
    </location>
</feature>
<accession>O59221</accession>
<gene>
    <name evidence="1" type="primary">rrp4</name>
    <name type="ordered locus">PH1551</name>
</gene>
<protein>
    <recommendedName>
        <fullName evidence="1">Exosome complex component Rrp4</fullName>
    </recommendedName>
</protein>
<name>RRP4_PYRHO</name>
<evidence type="ECO:0000255" key="1">
    <source>
        <dbReference type="HAMAP-Rule" id="MF_00623"/>
    </source>
</evidence>
<evidence type="ECO:0000256" key="2">
    <source>
        <dbReference type="SAM" id="MobiDB-lite"/>
    </source>
</evidence>
<dbReference type="EMBL" id="BA000001">
    <property type="protein sequence ID" value="BAA30663.1"/>
    <property type="molecule type" value="Genomic_DNA"/>
</dbReference>
<dbReference type="PIR" id="G71032">
    <property type="entry name" value="G71032"/>
</dbReference>
<dbReference type="RefSeq" id="WP_010885630.1">
    <property type="nucleotide sequence ID" value="NC_000961.1"/>
</dbReference>
<dbReference type="SMR" id="O59221"/>
<dbReference type="STRING" id="70601.gene:9378541"/>
<dbReference type="EnsemblBacteria" id="BAA30663">
    <property type="protein sequence ID" value="BAA30663"/>
    <property type="gene ID" value="BAA30663"/>
</dbReference>
<dbReference type="GeneID" id="1443870"/>
<dbReference type="KEGG" id="pho:PH1551"/>
<dbReference type="eggNOG" id="arCOG00678">
    <property type="taxonomic scope" value="Archaea"/>
</dbReference>
<dbReference type="OrthoDB" id="35160at2157"/>
<dbReference type="Proteomes" id="UP000000752">
    <property type="component" value="Chromosome"/>
</dbReference>
<dbReference type="GO" id="GO:0005737">
    <property type="term" value="C:cytoplasm"/>
    <property type="evidence" value="ECO:0007669"/>
    <property type="project" value="UniProtKB-SubCell"/>
</dbReference>
<dbReference type="GO" id="GO:0000178">
    <property type="term" value="C:exosome (RNase complex)"/>
    <property type="evidence" value="ECO:0007669"/>
    <property type="project" value="UniProtKB-KW"/>
</dbReference>
<dbReference type="GO" id="GO:0008143">
    <property type="term" value="F:poly(A) binding"/>
    <property type="evidence" value="ECO:0007669"/>
    <property type="project" value="InterPro"/>
</dbReference>
<dbReference type="GO" id="GO:0071034">
    <property type="term" value="P:CUT catabolic process"/>
    <property type="evidence" value="ECO:0007669"/>
    <property type="project" value="TreeGrafter"/>
</dbReference>
<dbReference type="GO" id="GO:0000467">
    <property type="term" value="P:exonucleolytic trimming to generate mature 3'-end of 5.8S rRNA from tricistronic rRNA transcript (SSU-rRNA, 5.8S rRNA, LSU-rRNA)"/>
    <property type="evidence" value="ECO:0007669"/>
    <property type="project" value="TreeGrafter"/>
</dbReference>
<dbReference type="GO" id="GO:0071051">
    <property type="term" value="P:poly(A)-dependent snoRNA 3'-end processing"/>
    <property type="evidence" value="ECO:0007669"/>
    <property type="project" value="TreeGrafter"/>
</dbReference>
<dbReference type="GO" id="GO:0006401">
    <property type="term" value="P:RNA catabolic process"/>
    <property type="evidence" value="ECO:0007669"/>
    <property type="project" value="UniProtKB-UniRule"/>
</dbReference>
<dbReference type="GO" id="GO:0034475">
    <property type="term" value="P:U4 snRNA 3'-end processing"/>
    <property type="evidence" value="ECO:0007669"/>
    <property type="project" value="TreeGrafter"/>
</dbReference>
<dbReference type="CDD" id="cd22524">
    <property type="entry name" value="KH-I_Rrp4_prokar"/>
    <property type="match status" value="1"/>
</dbReference>
<dbReference type="CDD" id="cd05789">
    <property type="entry name" value="S1_Rrp4"/>
    <property type="match status" value="1"/>
</dbReference>
<dbReference type="Gene3D" id="2.40.50.100">
    <property type="match status" value="1"/>
</dbReference>
<dbReference type="Gene3D" id="3.30.1370.10">
    <property type="entry name" value="K Homology domain, type 1"/>
    <property type="match status" value="1"/>
</dbReference>
<dbReference type="Gene3D" id="2.40.50.140">
    <property type="entry name" value="Nucleic acid-binding proteins"/>
    <property type="match status" value="1"/>
</dbReference>
<dbReference type="HAMAP" id="MF_00623">
    <property type="entry name" value="Exosome_Rrp4"/>
    <property type="match status" value="1"/>
</dbReference>
<dbReference type="InterPro" id="IPR026699">
    <property type="entry name" value="Exosome_RNA_bind1/RRP40/RRP4"/>
</dbReference>
<dbReference type="InterPro" id="IPR004087">
    <property type="entry name" value="KH_dom"/>
</dbReference>
<dbReference type="InterPro" id="IPR004088">
    <property type="entry name" value="KH_dom_type_1"/>
</dbReference>
<dbReference type="InterPro" id="IPR036612">
    <property type="entry name" value="KH_dom_type_1_sf"/>
</dbReference>
<dbReference type="InterPro" id="IPR012340">
    <property type="entry name" value="NA-bd_OB-fold"/>
</dbReference>
<dbReference type="InterPro" id="IPR023474">
    <property type="entry name" value="Rrp4"/>
</dbReference>
<dbReference type="InterPro" id="IPR054371">
    <property type="entry name" value="RRP4_N"/>
</dbReference>
<dbReference type="InterPro" id="IPR048565">
    <property type="entry name" value="RRP4_S1"/>
</dbReference>
<dbReference type="InterPro" id="IPR003029">
    <property type="entry name" value="S1_domain"/>
</dbReference>
<dbReference type="NCBIfam" id="NF003181">
    <property type="entry name" value="PRK04163.1-1"/>
    <property type="match status" value="1"/>
</dbReference>
<dbReference type="PANTHER" id="PTHR21321:SF4">
    <property type="entry name" value="EXOSOME COMPLEX COMPONENT RRP4"/>
    <property type="match status" value="1"/>
</dbReference>
<dbReference type="PANTHER" id="PTHR21321">
    <property type="entry name" value="PNAS-3 RELATED"/>
    <property type="match status" value="1"/>
</dbReference>
<dbReference type="Pfam" id="PF22625">
    <property type="entry name" value="ECR1_N_2"/>
    <property type="match status" value="1"/>
</dbReference>
<dbReference type="Pfam" id="PF15985">
    <property type="entry name" value="KH_6"/>
    <property type="match status" value="1"/>
</dbReference>
<dbReference type="Pfam" id="PF21266">
    <property type="entry name" value="RRP4_S1"/>
    <property type="match status" value="1"/>
</dbReference>
<dbReference type="SMART" id="SM00322">
    <property type="entry name" value="KH"/>
    <property type="match status" value="1"/>
</dbReference>
<dbReference type="SMART" id="SM00316">
    <property type="entry name" value="S1"/>
    <property type="match status" value="1"/>
</dbReference>
<dbReference type="SUPFAM" id="SSF50249">
    <property type="entry name" value="Nucleic acid-binding proteins"/>
    <property type="match status" value="1"/>
</dbReference>
<dbReference type="SUPFAM" id="SSF110324">
    <property type="entry name" value="Ribosomal L27 protein-like"/>
    <property type="match status" value="1"/>
</dbReference>
<dbReference type="PROSITE" id="PS50084">
    <property type="entry name" value="KH_TYPE_1"/>
    <property type="match status" value="1"/>
</dbReference>
<dbReference type="PROSITE" id="PS50126">
    <property type="entry name" value="S1"/>
    <property type="match status" value="1"/>
</dbReference>
<reference key="1">
    <citation type="journal article" date="1998" name="DNA Res.">
        <title>Complete sequence and gene organization of the genome of a hyper-thermophilic archaebacterium, Pyrococcus horikoshii OT3.</title>
        <authorList>
            <person name="Kawarabayasi Y."/>
            <person name="Sawada M."/>
            <person name="Horikawa H."/>
            <person name="Haikawa Y."/>
            <person name="Hino Y."/>
            <person name="Yamamoto S."/>
            <person name="Sekine M."/>
            <person name="Baba S."/>
            <person name="Kosugi H."/>
            <person name="Hosoyama A."/>
            <person name="Nagai Y."/>
            <person name="Sakai M."/>
            <person name="Ogura K."/>
            <person name="Otsuka R."/>
            <person name="Nakazawa H."/>
            <person name="Takamiya M."/>
            <person name="Ohfuku Y."/>
            <person name="Funahashi T."/>
            <person name="Tanaka T."/>
            <person name="Kudoh Y."/>
            <person name="Yamazaki J."/>
            <person name="Kushida N."/>
            <person name="Oguchi A."/>
            <person name="Aoki K."/>
            <person name="Yoshizawa T."/>
            <person name="Nakamura Y."/>
            <person name="Robb F.T."/>
            <person name="Horikoshi K."/>
            <person name="Masuchi Y."/>
            <person name="Shizuya H."/>
            <person name="Kikuchi H."/>
        </authorList>
    </citation>
    <scope>NUCLEOTIDE SEQUENCE [LARGE SCALE GENOMIC DNA]</scope>
    <source>
        <strain>ATCC 700860 / DSM 12428 / JCM 9974 / NBRC 100139 / OT-3</strain>
    </source>
</reference>
<sequence>MKRIFVQNRELVVPGTLLAQGPYKNGRGTFREGSRIYSTVIGLVDIKGNTIRVIPLEGPYIPEVGDNVIGKIVDVKFSSWVVDIGAPYLANLKIQDFTDEKIDLLRTDLRKFFDIGDIIYGKVKAITEVNNIDLTTKGMPFNGGPLKGGQIVKITPSRVPRVIGRGGSMINMIKKLTMTRIIVGQNGWIWVNGKNEALEKLAIEAILKIDRESHTKGLTDRIKSLLLSRLQELKEKGVIEEIPELEEEPQEETEVNNNDGETRRT</sequence>
<keyword id="KW-0963">Cytoplasm</keyword>
<keyword id="KW-0271">Exosome</keyword>
<keyword id="KW-0694">RNA-binding</keyword>
<comment type="function">
    <text evidence="1">Non-catalytic component of the exosome, which is a complex involved in RNA degradation. Increases the RNA binding and the efficiency of RNA degradation. Confers strong poly(A) specificity to the exosome.</text>
</comment>
<comment type="subunit">
    <text evidence="1">Component of the archaeal exosome complex. Forms a trimer of Rrp4 and/or Csl4 subunits. The trimer associates with a hexameric ring-like arrangement composed of 3 Rrp41-Rrp42 heterodimers.</text>
</comment>
<comment type="subcellular location">
    <subcellularLocation>
        <location evidence="1">Cytoplasm</location>
    </subcellularLocation>
</comment>
<comment type="similarity">
    <text evidence="1">Belongs to the RRP4 family.</text>
</comment>